<name>C3H67_ARATH</name>
<feature type="chain" id="PRO_0000213919" description="Zinc finger CCCH domain-containing protein 67">
    <location>
        <begin position="1"/>
        <end position="435"/>
    </location>
</feature>
<feature type="zinc finger region" description="C3H1-type 1" evidence="2">
    <location>
        <begin position="101"/>
        <end position="129"/>
    </location>
</feature>
<feature type="zinc finger region" description="C3H1-type 2" evidence="2">
    <location>
        <begin position="148"/>
        <end position="176"/>
    </location>
</feature>
<feature type="zinc finger region" description="C3H1-type 3" evidence="2">
    <location>
        <begin position="194"/>
        <end position="222"/>
    </location>
</feature>
<feature type="zinc finger region" description="C3H1-type 4" evidence="2">
    <location>
        <begin position="334"/>
        <end position="362"/>
    </location>
</feature>
<feature type="zinc finger region" description="C3H1-type 5" evidence="2">
    <location>
        <begin position="380"/>
        <end position="408"/>
    </location>
</feature>
<feature type="region of interest" description="Disordered" evidence="3">
    <location>
        <begin position="1"/>
        <end position="91"/>
    </location>
</feature>
<feature type="region of interest" description="Disordered" evidence="3">
    <location>
        <begin position="235"/>
        <end position="274"/>
    </location>
</feature>
<feature type="region of interest" description="Disordered" evidence="3">
    <location>
        <begin position="412"/>
        <end position="435"/>
    </location>
</feature>
<feature type="compositionally biased region" description="Low complexity" evidence="3">
    <location>
        <begin position="247"/>
        <end position="256"/>
    </location>
</feature>
<feature type="sequence conflict" description="In Ref. 3; AAV66094/AAW30022." evidence="4" ref="3">
    <original>R</original>
    <variation>K</variation>
    <location>
        <position position="101"/>
    </location>
</feature>
<dbReference type="EMBL" id="AB008265">
    <property type="protein sequence ID" value="BAB10568.1"/>
    <property type="molecule type" value="Genomic_DNA"/>
</dbReference>
<dbReference type="EMBL" id="CP002688">
    <property type="protein sequence ID" value="AED97724.1"/>
    <property type="molecule type" value="Genomic_DNA"/>
</dbReference>
<dbReference type="EMBL" id="BT020223">
    <property type="protein sequence ID" value="AAV66094.1"/>
    <property type="molecule type" value="mRNA"/>
</dbReference>
<dbReference type="EMBL" id="BT020443">
    <property type="protein sequence ID" value="AAW30022.1"/>
    <property type="molecule type" value="mRNA"/>
</dbReference>
<dbReference type="EMBL" id="AK228790">
    <property type="protein sequence ID" value="BAF00687.1"/>
    <property type="molecule type" value="mRNA"/>
</dbReference>
<dbReference type="RefSeq" id="NP_201131.1">
    <molecule id="Q5RJC5-1"/>
    <property type="nucleotide sequence ID" value="NM_125721.3"/>
</dbReference>
<dbReference type="FunCoup" id="Q5RJC5">
    <property type="interactions" value="1269"/>
</dbReference>
<dbReference type="STRING" id="3702.Q5RJC5"/>
<dbReference type="GlyGen" id="Q5RJC5">
    <property type="glycosylation" value="2 sites, 1 O-linked glycan (2 sites)"/>
</dbReference>
<dbReference type="iPTMnet" id="Q5RJC5"/>
<dbReference type="PaxDb" id="3702-AT5G63260.2"/>
<dbReference type="ProteomicsDB" id="240524">
    <molecule id="Q5RJC5-1"/>
</dbReference>
<dbReference type="EnsemblPlants" id="AT5G63260.1">
    <molecule id="Q5RJC5-1"/>
    <property type="protein sequence ID" value="AT5G63260.1"/>
    <property type="gene ID" value="AT5G63260"/>
</dbReference>
<dbReference type="GeneID" id="836446"/>
<dbReference type="Gramene" id="AT5G63260.1">
    <molecule id="Q5RJC5-1"/>
    <property type="protein sequence ID" value="AT5G63260.1"/>
    <property type="gene ID" value="AT5G63260"/>
</dbReference>
<dbReference type="KEGG" id="ath:AT5G63260"/>
<dbReference type="Araport" id="AT5G63260"/>
<dbReference type="TAIR" id="AT5G63260"/>
<dbReference type="eggNOG" id="KOG1677">
    <property type="taxonomic scope" value="Eukaryota"/>
</dbReference>
<dbReference type="HOGENOM" id="CLU_033292_3_1_1"/>
<dbReference type="InParanoid" id="Q5RJC5"/>
<dbReference type="OrthoDB" id="411372at2759"/>
<dbReference type="PhylomeDB" id="Q5RJC5"/>
<dbReference type="PRO" id="PR:Q5RJC5"/>
<dbReference type="Proteomes" id="UP000006548">
    <property type="component" value="Chromosome 5"/>
</dbReference>
<dbReference type="ExpressionAtlas" id="Q5RJC5">
    <property type="expression patterns" value="baseline and differential"/>
</dbReference>
<dbReference type="GO" id="GO:0005634">
    <property type="term" value="C:nucleus"/>
    <property type="evidence" value="ECO:0007669"/>
    <property type="project" value="UniProtKB-SubCell"/>
</dbReference>
<dbReference type="GO" id="GO:0003677">
    <property type="term" value="F:DNA binding"/>
    <property type="evidence" value="ECO:0007669"/>
    <property type="project" value="UniProtKB-KW"/>
</dbReference>
<dbReference type="GO" id="GO:0003729">
    <property type="term" value="F:mRNA binding"/>
    <property type="evidence" value="ECO:0007669"/>
    <property type="project" value="UniProtKB-ARBA"/>
</dbReference>
<dbReference type="GO" id="GO:0008270">
    <property type="term" value="F:zinc ion binding"/>
    <property type="evidence" value="ECO:0007669"/>
    <property type="project" value="UniProtKB-KW"/>
</dbReference>
<dbReference type="Gene3D" id="2.30.30.1190">
    <property type="match status" value="1"/>
</dbReference>
<dbReference type="Gene3D" id="4.10.1000.10">
    <property type="entry name" value="Zinc finger, CCCH-type"/>
    <property type="match status" value="3"/>
</dbReference>
<dbReference type="InterPro" id="IPR050974">
    <property type="entry name" value="Plant_ZF_CCCH"/>
</dbReference>
<dbReference type="InterPro" id="IPR000571">
    <property type="entry name" value="Znf_CCCH"/>
</dbReference>
<dbReference type="InterPro" id="IPR036855">
    <property type="entry name" value="Znf_CCCH_sf"/>
</dbReference>
<dbReference type="PANTHER" id="PTHR12506">
    <property type="entry name" value="PROTEIN PHOSPHATASE RELATED"/>
    <property type="match status" value="1"/>
</dbReference>
<dbReference type="PANTHER" id="PTHR12506:SF20">
    <property type="entry name" value="ZINC FINGER CCCH DOMAIN-CONTAINING PROTEIN 67"/>
    <property type="match status" value="1"/>
</dbReference>
<dbReference type="Pfam" id="PF00642">
    <property type="entry name" value="zf-CCCH"/>
    <property type="match status" value="5"/>
</dbReference>
<dbReference type="SMART" id="SM00356">
    <property type="entry name" value="ZnF_C3H1"/>
    <property type="match status" value="5"/>
</dbReference>
<dbReference type="SUPFAM" id="SSF90229">
    <property type="entry name" value="CCCH zinc finger"/>
    <property type="match status" value="5"/>
</dbReference>
<dbReference type="PROSITE" id="PS50103">
    <property type="entry name" value="ZF_C3H1"/>
    <property type="match status" value="5"/>
</dbReference>
<gene>
    <name type="ordered locus">At5g63260</name>
    <name type="ORF">MDC12.23</name>
</gene>
<keyword id="KW-0025">Alternative splicing</keyword>
<keyword id="KW-0238">DNA-binding</keyword>
<keyword id="KW-0479">Metal-binding</keyword>
<keyword id="KW-0539">Nucleus</keyword>
<keyword id="KW-1185">Reference proteome</keyword>
<keyword id="KW-0677">Repeat</keyword>
<keyword id="KW-0862">Zinc</keyword>
<keyword id="KW-0863">Zinc-finger</keyword>
<reference key="1">
    <citation type="journal article" date="1997" name="DNA Res.">
        <title>Structural analysis of Arabidopsis thaliana chromosome 5. III. Sequence features of the regions of 1,191,918 bp covered by seventeen physically assigned P1 clones.</title>
        <authorList>
            <person name="Nakamura Y."/>
            <person name="Sato S."/>
            <person name="Kaneko T."/>
            <person name="Kotani H."/>
            <person name="Asamizu E."/>
            <person name="Miyajima N."/>
            <person name="Tabata S."/>
        </authorList>
    </citation>
    <scope>NUCLEOTIDE SEQUENCE [LARGE SCALE GENOMIC DNA]</scope>
    <source>
        <strain>cv. Columbia</strain>
    </source>
</reference>
<reference key="2">
    <citation type="journal article" date="2017" name="Plant J.">
        <title>Araport11: a complete reannotation of the Arabidopsis thaliana reference genome.</title>
        <authorList>
            <person name="Cheng C.Y."/>
            <person name="Krishnakumar V."/>
            <person name="Chan A.P."/>
            <person name="Thibaud-Nissen F."/>
            <person name="Schobel S."/>
            <person name="Town C.D."/>
        </authorList>
    </citation>
    <scope>GENOME REANNOTATION</scope>
    <source>
        <strain>cv. Columbia</strain>
    </source>
</reference>
<reference key="3">
    <citation type="submission" date="2004-12" db="EMBL/GenBank/DDBJ databases">
        <title>Arabidopsis cDNA clones.</title>
        <authorList>
            <person name="Shinn P."/>
            <person name="Chen H."/>
            <person name="Cheuk R.F."/>
            <person name="Kim C.J."/>
            <person name="Ecker J.R."/>
        </authorList>
    </citation>
    <scope>NUCLEOTIDE SEQUENCE [LARGE SCALE MRNA]</scope>
    <source>
        <strain>cv. Columbia</strain>
    </source>
</reference>
<reference key="4">
    <citation type="submission" date="2006-07" db="EMBL/GenBank/DDBJ databases">
        <title>Large-scale analysis of RIKEN Arabidopsis full-length (RAFL) cDNAs.</title>
        <authorList>
            <person name="Totoki Y."/>
            <person name="Seki M."/>
            <person name="Ishida J."/>
            <person name="Nakajima M."/>
            <person name="Enju A."/>
            <person name="Kamiya A."/>
            <person name="Narusaka M."/>
            <person name="Shin-i T."/>
            <person name="Nakagawa M."/>
            <person name="Sakamoto N."/>
            <person name="Oishi K."/>
            <person name="Kohara Y."/>
            <person name="Kobayashi M."/>
            <person name="Toyoda A."/>
            <person name="Sakaki Y."/>
            <person name="Sakurai T."/>
            <person name="Iida K."/>
            <person name="Akiyama K."/>
            <person name="Satou M."/>
            <person name="Toyoda T."/>
            <person name="Konagaya A."/>
            <person name="Carninci P."/>
            <person name="Kawai J."/>
            <person name="Hayashizaki Y."/>
            <person name="Shinozaki K."/>
        </authorList>
    </citation>
    <scope>NUCLEOTIDE SEQUENCE [LARGE SCALE MRNA]</scope>
    <source>
        <strain>cv. Columbia</strain>
    </source>
</reference>
<reference key="5">
    <citation type="journal article" date="2008" name="BMC Genomics">
        <title>Genome-wide analysis of CCCH zinc finger family in Arabidopsis and rice.</title>
        <authorList>
            <person name="Wang D."/>
            <person name="Guo Y."/>
            <person name="Wu C."/>
            <person name="Yang G."/>
            <person name="Li Y."/>
            <person name="Zheng C."/>
        </authorList>
    </citation>
    <scope>NOMENCLATURE</scope>
</reference>
<proteinExistence type="evidence at transcript level"/>
<sequence>MSKPEETSDPNPTGPDPSRSSSDEVTVTVADRAPSDLNHVSEELSDQLRNVGLDDSAKELSVPISVPQGNVETDSRALFGSDQKEEEEGSEKRMMMVYPVRPDSEDCSFYMRTGSCKYGSSCKFNHPVRRKLQIGRERVRERDEDVENPKLMECKYYFRTGGCKYGESCRFSHMKEHNSPASVPELNFLGLPIRPGEKECPFYMRNGSCKFGSDCKFNHPDPTAIGGVDSPLYRGNNGGSFSPKAPSQASSTSWSSTRHMNGTGTAPFIPSMFPHSRGVTPQASDWNGYQASSAYPPERSPLAPSSYQVNNSLAETSSFSQYQHQMSVEEFPERPDQPECTYYLKTGDCKFKYKCKYHHPKNRLPKQAAFSFNDKGLPLRPDQSMCTHYSRYGICKFGPACRFDHSIPPTFSPSSSQTVEARQVGANGNEDDSWH</sequence>
<comment type="subcellular location">
    <subcellularLocation>
        <location evidence="1">Nucleus</location>
    </subcellularLocation>
</comment>
<comment type="alternative products">
    <event type="alternative splicing"/>
    <isoform>
        <id>Q5RJC5-1</id>
        <name>1</name>
        <sequence type="displayed"/>
    </isoform>
    <text>A number of isoforms are produced. According to EST sequences.</text>
</comment>
<organism>
    <name type="scientific">Arabidopsis thaliana</name>
    <name type="common">Mouse-ear cress</name>
    <dbReference type="NCBI Taxonomy" id="3702"/>
    <lineage>
        <taxon>Eukaryota</taxon>
        <taxon>Viridiplantae</taxon>
        <taxon>Streptophyta</taxon>
        <taxon>Embryophyta</taxon>
        <taxon>Tracheophyta</taxon>
        <taxon>Spermatophyta</taxon>
        <taxon>Magnoliopsida</taxon>
        <taxon>eudicotyledons</taxon>
        <taxon>Gunneridae</taxon>
        <taxon>Pentapetalae</taxon>
        <taxon>rosids</taxon>
        <taxon>malvids</taxon>
        <taxon>Brassicales</taxon>
        <taxon>Brassicaceae</taxon>
        <taxon>Camelineae</taxon>
        <taxon>Arabidopsis</taxon>
    </lineage>
</organism>
<accession>Q5RJC5</accession>
<accession>Q0WQB2</accession>
<accession>Q9FMJ7</accession>
<evidence type="ECO:0000250" key="1"/>
<evidence type="ECO:0000255" key="2">
    <source>
        <dbReference type="PROSITE-ProRule" id="PRU00723"/>
    </source>
</evidence>
<evidence type="ECO:0000256" key="3">
    <source>
        <dbReference type="SAM" id="MobiDB-lite"/>
    </source>
</evidence>
<evidence type="ECO:0000305" key="4"/>
<protein>
    <recommendedName>
        <fullName>Zinc finger CCCH domain-containing protein 67</fullName>
        <shortName>AtC3H67</shortName>
    </recommendedName>
    <alternativeName>
        <fullName>Zinc finger CCCH domain-containing protein ZFN-like 5</fullName>
    </alternativeName>
</protein>